<keyword id="KW-0963">Cytoplasm</keyword>
<keyword id="KW-0648">Protein biosynthesis</keyword>
<evidence type="ECO:0000255" key="1">
    <source>
        <dbReference type="HAMAP-Rule" id="MF_00040"/>
    </source>
</evidence>
<sequence length="187" mass="20957">MQTGSFDISELKRRMQGATHALQHELGGLRTGRASSSMLEPVQVDAYGTHMPLIQVATISVPEPRLLSVQVWDKSMIKAVEKAIVDSNLGLSPSTEGQVIRLRIPELNEERRKELVKVAHKYAEAARVAVRHVRRDGLDTLKKLEKNHEISEDDQERLAHDVQKVTDATIQEVDQLLAAKEKEILTV</sequence>
<organism>
    <name type="scientific">Rhodopseudomonas palustris (strain BisA53)</name>
    <dbReference type="NCBI Taxonomy" id="316055"/>
    <lineage>
        <taxon>Bacteria</taxon>
        <taxon>Pseudomonadati</taxon>
        <taxon>Pseudomonadota</taxon>
        <taxon>Alphaproteobacteria</taxon>
        <taxon>Hyphomicrobiales</taxon>
        <taxon>Nitrobacteraceae</taxon>
        <taxon>Rhodopseudomonas</taxon>
    </lineage>
</organism>
<proteinExistence type="inferred from homology"/>
<protein>
    <recommendedName>
        <fullName evidence="1">Ribosome-recycling factor</fullName>
        <shortName evidence="1">RRF</shortName>
    </recommendedName>
    <alternativeName>
        <fullName evidence="1">Ribosome-releasing factor</fullName>
    </alternativeName>
</protein>
<gene>
    <name evidence="1" type="primary">frr</name>
    <name type="ordered locus">RPE_2556</name>
</gene>
<reference key="1">
    <citation type="submission" date="2006-09" db="EMBL/GenBank/DDBJ databases">
        <title>Complete sequence of Rhodopseudomonas palustris BisA53.</title>
        <authorList>
            <consortium name="US DOE Joint Genome Institute"/>
            <person name="Copeland A."/>
            <person name="Lucas S."/>
            <person name="Lapidus A."/>
            <person name="Barry K."/>
            <person name="Detter J.C."/>
            <person name="Glavina del Rio T."/>
            <person name="Hammon N."/>
            <person name="Israni S."/>
            <person name="Dalin E."/>
            <person name="Tice H."/>
            <person name="Pitluck S."/>
            <person name="Chain P."/>
            <person name="Malfatti S."/>
            <person name="Shin M."/>
            <person name="Vergez L."/>
            <person name="Schmutz J."/>
            <person name="Larimer F."/>
            <person name="Land M."/>
            <person name="Hauser L."/>
            <person name="Pelletier D.A."/>
            <person name="Kyrpides N."/>
            <person name="Kim E."/>
            <person name="Harwood C.S."/>
            <person name="Oda Y."/>
            <person name="Richardson P."/>
        </authorList>
    </citation>
    <scope>NUCLEOTIDE SEQUENCE [LARGE SCALE GENOMIC DNA]</scope>
    <source>
        <strain>BisA53</strain>
    </source>
</reference>
<dbReference type="EMBL" id="CP000463">
    <property type="protein sequence ID" value="ABJ06494.1"/>
    <property type="molecule type" value="Genomic_DNA"/>
</dbReference>
<dbReference type="SMR" id="Q07NJ0"/>
<dbReference type="STRING" id="316055.RPE_2556"/>
<dbReference type="KEGG" id="rpe:RPE_2556"/>
<dbReference type="eggNOG" id="COG0233">
    <property type="taxonomic scope" value="Bacteria"/>
</dbReference>
<dbReference type="HOGENOM" id="CLU_073981_2_0_5"/>
<dbReference type="OrthoDB" id="9804006at2"/>
<dbReference type="GO" id="GO:0005829">
    <property type="term" value="C:cytosol"/>
    <property type="evidence" value="ECO:0007669"/>
    <property type="project" value="GOC"/>
</dbReference>
<dbReference type="GO" id="GO:0043023">
    <property type="term" value="F:ribosomal large subunit binding"/>
    <property type="evidence" value="ECO:0007669"/>
    <property type="project" value="TreeGrafter"/>
</dbReference>
<dbReference type="GO" id="GO:0002184">
    <property type="term" value="P:cytoplasmic translational termination"/>
    <property type="evidence" value="ECO:0007669"/>
    <property type="project" value="TreeGrafter"/>
</dbReference>
<dbReference type="CDD" id="cd00520">
    <property type="entry name" value="RRF"/>
    <property type="match status" value="1"/>
</dbReference>
<dbReference type="FunFam" id="1.10.132.20:FF:000001">
    <property type="entry name" value="Ribosome-recycling factor"/>
    <property type="match status" value="1"/>
</dbReference>
<dbReference type="FunFam" id="3.30.1360.40:FF:000001">
    <property type="entry name" value="Ribosome-recycling factor"/>
    <property type="match status" value="1"/>
</dbReference>
<dbReference type="Gene3D" id="3.30.1360.40">
    <property type="match status" value="1"/>
</dbReference>
<dbReference type="Gene3D" id="1.10.132.20">
    <property type="entry name" value="Ribosome-recycling factor"/>
    <property type="match status" value="1"/>
</dbReference>
<dbReference type="HAMAP" id="MF_00040">
    <property type="entry name" value="RRF"/>
    <property type="match status" value="1"/>
</dbReference>
<dbReference type="InterPro" id="IPR002661">
    <property type="entry name" value="Ribosome_recyc_fac"/>
</dbReference>
<dbReference type="InterPro" id="IPR023584">
    <property type="entry name" value="Ribosome_recyc_fac_dom"/>
</dbReference>
<dbReference type="InterPro" id="IPR036191">
    <property type="entry name" value="RRF_sf"/>
</dbReference>
<dbReference type="NCBIfam" id="TIGR00496">
    <property type="entry name" value="frr"/>
    <property type="match status" value="1"/>
</dbReference>
<dbReference type="PANTHER" id="PTHR20982:SF3">
    <property type="entry name" value="MITOCHONDRIAL RIBOSOME RECYCLING FACTOR PSEUDO 1"/>
    <property type="match status" value="1"/>
</dbReference>
<dbReference type="PANTHER" id="PTHR20982">
    <property type="entry name" value="RIBOSOME RECYCLING FACTOR"/>
    <property type="match status" value="1"/>
</dbReference>
<dbReference type="Pfam" id="PF01765">
    <property type="entry name" value="RRF"/>
    <property type="match status" value="1"/>
</dbReference>
<dbReference type="SUPFAM" id="SSF55194">
    <property type="entry name" value="Ribosome recycling factor, RRF"/>
    <property type="match status" value="1"/>
</dbReference>
<name>RRF_RHOP5</name>
<feature type="chain" id="PRO_0000341034" description="Ribosome-recycling factor">
    <location>
        <begin position="1"/>
        <end position="187"/>
    </location>
</feature>
<comment type="function">
    <text evidence="1">Responsible for the release of ribosomes from messenger RNA at the termination of protein biosynthesis. May increase the efficiency of translation by recycling ribosomes from one round of translation to another.</text>
</comment>
<comment type="subcellular location">
    <subcellularLocation>
        <location evidence="1">Cytoplasm</location>
    </subcellularLocation>
</comment>
<comment type="similarity">
    <text evidence="1">Belongs to the RRF family.</text>
</comment>
<accession>Q07NJ0</accession>